<reference key="1">
    <citation type="journal article" date="2002" name="DNA Res.">
        <title>Complete genomic sequence of nitrogen-fixing symbiotic bacterium Bradyrhizobium japonicum USDA110.</title>
        <authorList>
            <person name="Kaneko T."/>
            <person name="Nakamura Y."/>
            <person name="Sato S."/>
            <person name="Minamisawa K."/>
            <person name="Uchiumi T."/>
            <person name="Sasamoto S."/>
            <person name="Watanabe A."/>
            <person name="Idesawa K."/>
            <person name="Iriguchi M."/>
            <person name="Kawashima K."/>
            <person name="Kohara M."/>
            <person name="Matsumoto M."/>
            <person name="Shimpo S."/>
            <person name="Tsuruoka H."/>
            <person name="Wada T."/>
            <person name="Yamada M."/>
            <person name="Tabata S."/>
        </authorList>
    </citation>
    <scope>NUCLEOTIDE SEQUENCE [LARGE SCALE GENOMIC DNA]</scope>
    <source>
        <strain>JCM 10833 / BCRC 13528 / IAM 13628 / NBRC 14792 / USDA 110</strain>
    </source>
</reference>
<gene>
    <name type="ordered locus">blr7842</name>
</gene>
<evidence type="ECO:0000255" key="1">
    <source>
        <dbReference type="HAMAP-Rule" id="MF_00775"/>
    </source>
</evidence>
<keyword id="KW-1185">Reference proteome</keyword>
<sequence length="152" mass="16956">MTPTLDTKYVFTITARIGDVVTAGETGIGVRRIIPIIGGEVTGAVTGKVLPFGADFQTIRPNELIDLEAKYAFETADGAIVYVENKGIRFGPVELLQELKRGEPVDPKLIYFRTVPRFETGHEKYRWLMEHIFVASAARHADRVVIDVHQVM</sequence>
<dbReference type="EMBL" id="BA000040">
    <property type="protein sequence ID" value="BAC53107.1"/>
    <property type="molecule type" value="Genomic_DNA"/>
</dbReference>
<dbReference type="RefSeq" id="NP_774482.1">
    <property type="nucleotide sequence ID" value="NC_004463.1"/>
</dbReference>
<dbReference type="RefSeq" id="WP_011090566.1">
    <property type="nucleotide sequence ID" value="NC_004463.1"/>
</dbReference>
<dbReference type="SMR" id="Q89CF5"/>
<dbReference type="STRING" id="224911.AAV28_36910"/>
<dbReference type="EnsemblBacteria" id="BAC53107">
    <property type="protein sequence ID" value="BAC53107"/>
    <property type="gene ID" value="BAC53107"/>
</dbReference>
<dbReference type="GeneID" id="46494772"/>
<dbReference type="KEGG" id="bja:blr7842"/>
<dbReference type="PATRIC" id="fig|224911.44.peg.7987"/>
<dbReference type="eggNOG" id="ENOG5032SS8">
    <property type="taxonomic scope" value="Bacteria"/>
</dbReference>
<dbReference type="HOGENOM" id="CLU_096872_4_3_5"/>
<dbReference type="InParanoid" id="Q89CF5"/>
<dbReference type="OrthoDB" id="5294829at2"/>
<dbReference type="PhylomeDB" id="Q89CF5"/>
<dbReference type="Proteomes" id="UP000002526">
    <property type="component" value="Chromosome"/>
</dbReference>
<dbReference type="Gene3D" id="2.40.160.20">
    <property type="match status" value="1"/>
</dbReference>
<dbReference type="HAMAP" id="MF_00775">
    <property type="entry name" value="UPF0311"/>
    <property type="match status" value="1"/>
</dbReference>
<dbReference type="InterPro" id="IPR020915">
    <property type="entry name" value="UPF0311"/>
</dbReference>
<dbReference type="NCBIfam" id="NF002045">
    <property type="entry name" value="PRK00872.1-1"/>
    <property type="match status" value="1"/>
</dbReference>
<dbReference type="PANTHER" id="PTHR37315">
    <property type="entry name" value="UPF0311 PROTEIN BLR7842"/>
    <property type="match status" value="1"/>
</dbReference>
<dbReference type="PANTHER" id="PTHR37315:SF1">
    <property type="entry name" value="UPF0311 PROTEIN BLR7842"/>
    <property type="match status" value="1"/>
</dbReference>
<dbReference type="Pfam" id="PF11578">
    <property type="entry name" value="DUF3237"/>
    <property type="match status" value="1"/>
</dbReference>
<organism>
    <name type="scientific">Bradyrhizobium diazoefficiens (strain JCM 10833 / BCRC 13528 / IAM 13628 / NBRC 14792 / USDA 110)</name>
    <dbReference type="NCBI Taxonomy" id="224911"/>
    <lineage>
        <taxon>Bacteria</taxon>
        <taxon>Pseudomonadati</taxon>
        <taxon>Pseudomonadota</taxon>
        <taxon>Alphaproteobacteria</taxon>
        <taxon>Hyphomicrobiales</taxon>
        <taxon>Nitrobacteraceae</taxon>
        <taxon>Bradyrhizobium</taxon>
    </lineage>
</organism>
<name>Y7842_BRADU</name>
<accession>Q89CF5</accession>
<feature type="chain" id="PRO_0000108122" description="UPF0311 protein blr7842">
    <location>
        <begin position="1"/>
        <end position="152"/>
    </location>
</feature>
<protein>
    <recommendedName>
        <fullName evidence="1">UPF0311 protein blr7842</fullName>
    </recommendedName>
</protein>
<proteinExistence type="inferred from homology"/>
<comment type="similarity">
    <text evidence="1">Belongs to the UPF0311 family.</text>
</comment>